<organism>
    <name type="scientific">Arabidopsis thaliana</name>
    <name type="common">Mouse-ear cress</name>
    <dbReference type="NCBI Taxonomy" id="3702"/>
    <lineage>
        <taxon>Eukaryota</taxon>
        <taxon>Viridiplantae</taxon>
        <taxon>Streptophyta</taxon>
        <taxon>Embryophyta</taxon>
        <taxon>Tracheophyta</taxon>
        <taxon>Spermatophyta</taxon>
        <taxon>Magnoliopsida</taxon>
        <taxon>eudicotyledons</taxon>
        <taxon>Gunneridae</taxon>
        <taxon>Pentapetalae</taxon>
        <taxon>rosids</taxon>
        <taxon>malvids</taxon>
        <taxon>Brassicales</taxon>
        <taxon>Brassicaceae</taxon>
        <taxon>Camelineae</taxon>
        <taxon>Arabidopsis</taxon>
    </lineage>
</organism>
<feature type="chain" id="PRO_0000356080" description="Pentatricopeptide repeat-containing protein At3g09060">
    <location>
        <begin position="1"/>
        <end position="687"/>
    </location>
</feature>
<feature type="repeat" description="PPR 1">
    <location>
        <begin position="42"/>
        <end position="76"/>
    </location>
</feature>
<feature type="repeat" description="PPR 2">
    <location>
        <begin position="77"/>
        <end position="107"/>
    </location>
</feature>
<feature type="repeat" description="PPR 3">
    <location>
        <begin position="113"/>
        <end position="147"/>
    </location>
</feature>
<feature type="repeat" description="PPR 4">
    <location>
        <begin position="148"/>
        <end position="182"/>
    </location>
</feature>
<feature type="repeat" description="PPR 5">
    <location>
        <begin position="183"/>
        <end position="217"/>
    </location>
</feature>
<feature type="repeat" description="PPR 6">
    <location>
        <begin position="218"/>
        <end position="253"/>
    </location>
</feature>
<feature type="repeat" description="PPR 7">
    <location>
        <begin position="254"/>
        <end position="288"/>
    </location>
</feature>
<feature type="repeat" description="PPR 8">
    <location>
        <begin position="289"/>
        <end position="323"/>
    </location>
</feature>
<feature type="repeat" description="PPR 9">
    <location>
        <begin position="324"/>
        <end position="358"/>
    </location>
</feature>
<feature type="repeat" description="PPR 10">
    <location>
        <begin position="359"/>
        <end position="392"/>
    </location>
</feature>
<feature type="repeat" description="PPR 11">
    <location>
        <begin position="393"/>
        <end position="427"/>
    </location>
</feature>
<feature type="repeat" description="PPR 12">
    <location>
        <begin position="428"/>
        <end position="462"/>
    </location>
</feature>
<feature type="repeat" description="PPR 13">
    <location>
        <begin position="463"/>
        <end position="497"/>
    </location>
</feature>
<feature type="repeat" description="PPR 14">
    <location>
        <begin position="498"/>
        <end position="532"/>
    </location>
</feature>
<feature type="repeat" description="PPR 15">
    <location>
        <begin position="533"/>
        <end position="567"/>
    </location>
</feature>
<feature type="repeat" description="PPR 16">
    <location>
        <begin position="568"/>
        <end position="602"/>
    </location>
</feature>
<feature type="repeat" description="PPR 17">
    <location>
        <begin position="603"/>
        <end position="637"/>
    </location>
</feature>
<feature type="repeat" description="PPR 18">
    <location>
        <begin position="638"/>
        <end position="672"/>
    </location>
</feature>
<comment type="similarity">
    <text evidence="1">Belongs to the PPR family. P subfamily.</text>
</comment>
<comment type="online information" name="Pentatricopeptide repeat proteins">
    <link uri="https://ppr.plantenergy.uwa.edu.au"/>
</comment>
<keyword id="KW-1185">Reference proteome</keyword>
<keyword id="KW-0677">Repeat</keyword>
<dbReference type="EMBL" id="AC009326">
    <property type="protein sequence ID" value="AAD56322.1"/>
    <property type="molecule type" value="Genomic_DNA"/>
</dbReference>
<dbReference type="EMBL" id="CP002686">
    <property type="protein sequence ID" value="AEE74715.1"/>
    <property type="molecule type" value="Genomic_DNA"/>
</dbReference>
<dbReference type="EMBL" id="CP002686">
    <property type="protein sequence ID" value="ANM64999.1"/>
    <property type="molecule type" value="Genomic_DNA"/>
</dbReference>
<dbReference type="RefSeq" id="NP_001319507.1">
    <property type="nucleotide sequence ID" value="NM_001337799.1"/>
</dbReference>
<dbReference type="RefSeq" id="NP_187518.1">
    <property type="nucleotide sequence ID" value="NM_111740.2"/>
</dbReference>
<dbReference type="SMR" id="Q9SS81"/>
<dbReference type="FunCoup" id="Q9SS81">
    <property type="interactions" value="80"/>
</dbReference>
<dbReference type="PaxDb" id="3702-AT3G09060.1"/>
<dbReference type="ProteomicsDB" id="249092"/>
<dbReference type="EnsemblPlants" id="AT3G09060.1">
    <property type="protein sequence ID" value="AT3G09060.1"/>
    <property type="gene ID" value="AT3G09060"/>
</dbReference>
<dbReference type="EnsemblPlants" id="AT3G09060.2">
    <property type="protein sequence ID" value="AT3G09060.2"/>
    <property type="gene ID" value="AT3G09060"/>
</dbReference>
<dbReference type="GeneID" id="820059"/>
<dbReference type="Gramene" id="AT3G09060.1">
    <property type="protein sequence ID" value="AT3G09060.1"/>
    <property type="gene ID" value="AT3G09060"/>
</dbReference>
<dbReference type="Gramene" id="AT3G09060.2">
    <property type="protein sequence ID" value="AT3G09060.2"/>
    <property type="gene ID" value="AT3G09060"/>
</dbReference>
<dbReference type="KEGG" id="ath:AT3G09060"/>
<dbReference type="Araport" id="AT3G09060"/>
<dbReference type="TAIR" id="AT3G09060"/>
<dbReference type="eggNOG" id="KOG4197">
    <property type="taxonomic scope" value="Eukaryota"/>
</dbReference>
<dbReference type="HOGENOM" id="CLU_002706_49_12_1"/>
<dbReference type="InParanoid" id="Q9SS81"/>
<dbReference type="OMA" id="DMALNLW"/>
<dbReference type="PhylomeDB" id="Q9SS81"/>
<dbReference type="PRO" id="PR:Q9SS81"/>
<dbReference type="Proteomes" id="UP000006548">
    <property type="component" value="Chromosome 3"/>
</dbReference>
<dbReference type="ExpressionAtlas" id="Q9SS81">
    <property type="expression patterns" value="baseline and differential"/>
</dbReference>
<dbReference type="Gene3D" id="1.25.40.10">
    <property type="entry name" value="Tetratricopeptide repeat domain"/>
    <property type="match status" value="8"/>
</dbReference>
<dbReference type="InterPro" id="IPR002885">
    <property type="entry name" value="Pentatricopeptide_rpt"/>
</dbReference>
<dbReference type="InterPro" id="IPR033443">
    <property type="entry name" value="PROP1-like_PPR_dom"/>
</dbReference>
<dbReference type="InterPro" id="IPR011990">
    <property type="entry name" value="TPR-like_helical_dom_sf"/>
</dbReference>
<dbReference type="NCBIfam" id="TIGR00756">
    <property type="entry name" value="PPR"/>
    <property type="match status" value="17"/>
</dbReference>
<dbReference type="PANTHER" id="PTHR47447">
    <property type="entry name" value="OS03G0856100 PROTEIN"/>
    <property type="match status" value="1"/>
</dbReference>
<dbReference type="PANTHER" id="PTHR47447:SF28">
    <property type="entry name" value="PENTACOTRIPEPTIDE-REPEAT REGION OF PRORP DOMAIN-CONTAINING PROTEIN"/>
    <property type="match status" value="1"/>
</dbReference>
<dbReference type="Pfam" id="PF01535">
    <property type="entry name" value="PPR"/>
    <property type="match status" value="2"/>
</dbReference>
<dbReference type="Pfam" id="PF12854">
    <property type="entry name" value="PPR_1"/>
    <property type="match status" value="2"/>
</dbReference>
<dbReference type="Pfam" id="PF13041">
    <property type="entry name" value="PPR_2"/>
    <property type="match status" value="6"/>
</dbReference>
<dbReference type="Pfam" id="PF17177">
    <property type="entry name" value="PPR_long"/>
    <property type="match status" value="1"/>
</dbReference>
<dbReference type="SUPFAM" id="SSF81901">
    <property type="entry name" value="HCP-like"/>
    <property type="match status" value="1"/>
</dbReference>
<dbReference type="PROSITE" id="PS51375">
    <property type="entry name" value="PPR"/>
    <property type="match status" value="18"/>
</dbReference>
<evidence type="ECO:0000305" key="1"/>
<gene>
    <name type="ordered locus">At3g09060</name>
    <name type="ORF">MZB10.9</name>
</gene>
<proteinExistence type="evidence at transcript level"/>
<accession>Q9SS81</accession>
<name>PP221_ARATH</name>
<sequence length="687" mass="77901">MVVFPKSLSPKHVLKLLKSEKNPRAAFALFDSATRHPGYAHSAVVYHHILRRLSETRMVNHVSRIVELIRSQECKCDEDVALSVIKTYGKNSMPDQALDVFKRMREIFGCEPAIRSYNTLLNAFVEAKQWVKVESLFAYFETAGVAPNLQTYNVLIKMSCKKKEFEKARGFLDWMWKEGFKPDVFSYSTVINDLAKAGKLDDALELFDEMSERGVAPDVTCYNILIDGFLKEKDHKTAMELWDRLLEDSSVYPNVKTHNIMISGLSKCGRVDDCLKIWERMKQNEREKDLYTYSSLIHGLCDAGNVDKAESVFNELDERKASIDVVTYNTMLGGFCRCGKIKESLELWRIMEHKNSVNIVSYNILIKGLLENGKIDEATMIWRLMPAKGYAADKTTYGIFIHGLCVNGYVNKALGVMQEVESSGGHLDVYAYASIIDCLCKKKRLEEASNLVKEMSKHGVELNSHVCNALIGGLIRDSRLGEASFFLREMGKNGCRPTVVSYNILICGLCKAGKFGEASAFVKEMLENGWKPDLKTYSILLCGLCRDRKIDLALELWHQFLQSGLETDVMMHNILIHGLCSVGKLDDAMTVMANMEHRNCTANLVTYNTLMEGFFKVGDSNRATVIWGYMYKMGLQPDIISYNTIMKGLCMCRGVSYAMEFFDDARNHGIFPTVYTWNILVRAVVNR</sequence>
<protein>
    <recommendedName>
        <fullName>Pentatricopeptide repeat-containing protein At3g09060</fullName>
    </recommendedName>
</protein>
<reference key="1">
    <citation type="journal article" date="2000" name="Nature">
        <title>Sequence and analysis of chromosome 3 of the plant Arabidopsis thaliana.</title>
        <authorList>
            <person name="Salanoubat M."/>
            <person name="Lemcke K."/>
            <person name="Rieger M."/>
            <person name="Ansorge W."/>
            <person name="Unseld M."/>
            <person name="Fartmann B."/>
            <person name="Valle G."/>
            <person name="Bloecker H."/>
            <person name="Perez-Alonso M."/>
            <person name="Obermaier B."/>
            <person name="Delseny M."/>
            <person name="Boutry M."/>
            <person name="Grivell L.A."/>
            <person name="Mache R."/>
            <person name="Puigdomenech P."/>
            <person name="De Simone V."/>
            <person name="Choisne N."/>
            <person name="Artiguenave F."/>
            <person name="Robert C."/>
            <person name="Brottier P."/>
            <person name="Wincker P."/>
            <person name="Cattolico L."/>
            <person name="Weissenbach J."/>
            <person name="Saurin W."/>
            <person name="Quetier F."/>
            <person name="Schaefer M."/>
            <person name="Mueller-Auer S."/>
            <person name="Gabel C."/>
            <person name="Fuchs M."/>
            <person name="Benes V."/>
            <person name="Wurmbach E."/>
            <person name="Drzonek H."/>
            <person name="Erfle H."/>
            <person name="Jordan N."/>
            <person name="Bangert S."/>
            <person name="Wiedelmann R."/>
            <person name="Kranz H."/>
            <person name="Voss H."/>
            <person name="Holland R."/>
            <person name="Brandt P."/>
            <person name="Nyakatura G."/>
            <person name="Vezzi A."/>
            <person name="D'Angelo M."/>
            <person name="Pallavicini A."/>
            <person name="Toppo S."/>
            <person name="Simionati B."/>
            <person name="Conrad A."/>
            <person name="Hornischer K."/>
            <person name="Kauer G."/>
            <person name="Loehnert T.-H."/>
            <person name="Nordsiek G."/>
            <person name="Reichelt J."/>
            <person name="Scharfe M."/>
            <person name="Schoen O."/>
            <person name="Bargues M."/>
            <person name="Terol J."/>
            <person name="Climent J."/>
            <person name="Navarro P."/>
            <person name="Collado C."/>
            <person name="Perez-Perez A."/>
            <person name="Ottenwaelder B."/>
            <person name="Duchemin D."/>
            <person name="Cooke R."/>
            <person name="Laudie M."/>
            <person name="Berger-Llauro C."/>
            <person name="Purnelle B."/>
            <person name="Masuy D."/>
            <person name="de Haan M."/>
            <person name="Maarse A.C."/>
            <person name="Alcaraz J.-P."/>
            <person name="Cottet A."/>
            <person name="Casacuberta E."/>
            <person name="Monfort A."/>
            <person name="Argiriou A."/>
            <person name="Flores M."/>
            <person name="Liguori R."/>
            <person name="Vitale D."/>
            <person name="Mannhaupt G."/>
            <person name="Haase D."/>
            <person name="Schoof H."/>
            <person name="Rudd S."/>
            <person name="Zaccaria P."/>
            <person name="Mewes H.-W."/>
            <person name="Mayer K.F.X."/>
            <person name="Kaul S."/>
            <person name="Town C.D."/>
            <person name="Koo H.L."/>
            <person name="Tallon L.J."/>
            <person name="Jenkins J."/>
            <person name="Rooney T."/>
            <person name="Rizzo M."/>
            <person name="Walts A."/>
            <person name="Utterback T."/>
            <person name="Fujii C.Y."/>
            <person name="Shea T.P."/>
            <person name="Creasy T.H."/>
            <person name="Haas B."/>
            <person name="Maiti R."/>
            <person name="Wu D."/>
            <person name="Peterson J."/>
            <person name="Van Aken S."/>
            <person name="Pai G."/>
            <person name="Militscher J."/>
            <person name="Sellers P."/>
            <person name="Gill J.E."/>
            <person name="Feldblyum T.V."/>
            <person name="Preuss D."/>
            <person name="Lin X."/>
            <person name="Nierman W.C."/>
            <person name="Salzberg S.L."/>
            <person name="White O."/>
            <person name="Venter J.C."/>
            <person name="Fraser C.M."/>
            <person name="Kaneko T."/>
            <person name="Nakamura Y."/>
            <person name="Sato S."/>
            <person name="Kato T."/>
            <person name="Asamizu E."/>
            <person name="Sasamoto S."/>
            <person name="Kimura T."/>
            <person name="Idesawa K."/>
            <person name="Kawashima K."/>
            <person name="Kishida Y."/>
            <person name="Kiyokawa C."/>
            <person name="Kohara M."/>
            <person name="Matsumoto M."/>
            <person name="Matsuno A."/>
            <person name="Muraki A."/>
            <person name="Nakayama S."/>
            <person name="Nakazaki N."/>
            <person name="Shinpo S."/>
            <person name="Takeuchi C."/>
            <person name="Wada T."/>
            <person name="Watanabe A."/>
            <person name="Yamada M."/>
            <person name="Yasuda M."/>
            <person name="Tabata S."/>
        </authorList>
    </citation>
    <scope>NUCLEOTIDE SEQUENCE [LARGE SCALE GENOMIC DNA]</scope>
    <source>
        <strain>cv. Columbia</strain>
    </source>
</reference>
<reference key="2">
    <citation type="journal article" date="2017" name="Plant J.">
        <title>Araport11: a complete reannotation of the Arabidopsis thaliana reference genome.</title>
        <authorList>
            <person name="Cheng C.Y."/>
            <person name="Krishnakumar V."/>
            <person name="Chan A.P."/>
            <person name="Thibaud-Nissen F."/>
            <person name="Schobel S."/>
            <person name="Town C.D."/>
        </authorList>
    </citation>
    <scope>GENOME REANNOTATION</scope>
    <source>
        <strain>cv. Columbia</strain>
    </source>
</reference>
<reference key="3">
    <citation type="journal article" date="2004" name="Plant Cell">
        <title>Genome-wide analysis of Arabidopsis pentatricopeptide repeat proteins reveals their essential role in organelle biogenesis.</title>
        <authorList>
            <person name="Lurin C."/>
            <person name="Andres C."/>
            <person name="Aubourg S."/>
            <person name="Bellaoui M."/>
            <person name="Bitton F."/>
            <person name="Bruyere C."/>
            <person name="Caboche M."/>
            <person name="Debast C."/>
            <person name="Gualberto J."/>
            <person name="Hoffmann B."/>
            <person name="Lecharny A."/>
            <person name="Le Ret M."/>
            <person name="Martin-Magniette M.-L."/>
            <person name="Mireau H."/>
            <person name="Peeters N."/>
            <person name="Renou J.-P."/>
            <person name="Szurek B."/>
            <person name="Taconnat L."/>
            <person name="Small I."/>
        </authorList>
    </citation>
    <scope>GENE FAMILY</scope>
</reference>